<name>RL11_RICAE</name>
<reference key="1">
    <citation type="journal article" date="2009" name="BMC Genomics">
        <title>Analysis of the Rickettsia africae genome reveals that virulence acquisition in Rickettsia species may be explained by genome reduction.</title>
        <authorList>
            <person name="Fournier P.-E."/>
            <person name="El Karkouri K."/>
            <person name="Leroy Q."/>
            <person name="Robert C."/>
            <person name="Giumelli B."/>
            <person name="Renesto P."/>
            <person name="Socolovschi C."/>
            <person name="Parola P."/>
            <person name="Audic S."/>
            <person name="Raoult D."/>
        </authorList>
    </citation>
    <scope>NUCLEOTIDE SEQUENCE [LARGE SCALE GENOMIC DNA]</scope>
    <source>
        <strain>ESF-5</strain>
    </source>
</reference>
<dbReference type="EMBL" id="CP001612">
    <property type="protein sequence ID" value="ACP53133.1"/>
    <property type="molecule type" value="Genomic_DNA"/>
</dbReference>
<dbReference type="RefSeq" id="WP_004996639.1">
    <property type="nucleotide sequence ID" value="NC_012633.1"/>
</dbReference>
<dbReference type="SMR" id="C3PMH3"/>
<dbReference type="GeneID" id="95361892"/>
<dbReference type="KEGG" id="raf:RAF_ORF0166"/>
<dbReference type="HOGENOM" id="CLU_074237_2_0_5"/>
<dbReference type="Proteomes" id="UP000002305">
    <property type="component" value="Chromosome"/>
</dbReference>
<dbReference type="GO" id="GO:0022625">
    <property type="term" value="C:cytosolic large ribosomal subunit"/>
    <property type="evidence" value="ECO:0007669"/>
    <property type="project" value="TreeGrafter"/>
</dbReference>
<dbReference type="GO" id="GO:0070180">
    <property type="term" value="F:large ribosomal subunit rRNA binding"/>
    <property type="evidence" value="ECO:0007669"/>
    <property type="project" value="UniProtKB-UniRule"/>
</dbReference>
<dbReference type="GO" id="GO:0003735">
    <property type="term" value="F:structural constituent of ribosome"/>
    <property type="evidence" value="ECO:0007669"/>
    <property type="project" value="InterPro"/>
</dbReference>
<dbReference type="GO" id="GO:0006412">
    <property type="term" value="P:translation"/>
    <property type="evidence" value="ECO:0007669"/>
    <property type="project" value="UniProtKB-UniRule"/>
</dbReference>
<dbReference type="CDD" id="cd00349">
    <property type="entry name" value="Ribosomal_L11"/>
    <property type="match status" value="1"/>
</dbReference>
<dbReference type="FunFam" id="3.30.1550.10:FF:000005">
    <property type="entry name" value="50S ribosomal protein L11"/>
    <property type="match status" value="1"/>
</dbReference>
<dbReference type="Gene3D" id="1.10.10.250">
    <property type="entry name" value="Ribosomal protein L11, C-terminal domain"/>
    <property type="match status" value="1"/>
</dbReference>
<dbReference type="Gene3D" id="3.30.1550.10">
    <property type="entry name" value="Ribosomal protein L11/L12, N-terminal domain"/>
    <property type="match status" value="1"/>
</dbReference>
<dbReference type="HAMAP" id="MF_00736">
    <property type="entry name" value="Ribosomal_uL11"/>
    <property type="match status" value="1"/>
</dbReference>
<dbReference type="InterPro" id="IPR000911">
    <property type="entry name" value="Ribosomal_uL11"/>
</dbReference>
<dbReference type="InterPro" id="IPR006519">
    <property type="entry name" value="Ribosomal_uL11_bac-typ"/>
</dbReference>
<dbReference type="InterPro" id="IPR020783">
    <property type="entry name" value="Ribosomal_uL11_C"/>
</dbReference>
<dbReference type="InterPro" id="IPR036769">
    <property type="entry name" value="Ribosomal_uL11_C_sf"/>
</dbReference>
<dbReference type="InterPro" id="IPR020785">
    <property type="entry name" value="Ribosomal_uL11_CS"/>
</dbReference>
<dbReference type="InterPro" id="IPR020784">
    <property type="entry name" value="Ribosomal_uL11_N"/>
</dbReference>
<dbReference type="InterPro" id="IPR036796">
    <property type="entry name" value="Ribosomal_uL11_N_sf"/>
</dbReference>
<dbReference type="NCBIfam" id="TIGR01632">
    <property type="entry name" value="L11_bact"/>
    <property type="match status" value="1"/>
</dbReference>
<dbReference type="PANTHER" id="PTHR11661">
    <property type="entry name" value="60S RIBOSOMAL PROTEIN L12"/>
    <property type="match status" value="1"/>
</dbReference>
<dbReference type="PANTHER" id="PTHR11661:SF1">
    <property type="entry name" value="LARGE RIBOSOMAL SUBUNIT PROTEIN UL11M"/>
    <property type="match status" value="1"/>
</dbReference>
<dbReference type="Pfam" id="PF00298">
    <property type="entry name" value="Ribosomal_L11"/>
    <property type="match status" value="1"/>
</dbReference>
<dbReference type="Pfam" id="PF03946">
    <property type="entry name" value="Ribosomal_L11_N"/>
    <property type="match status" value="1"/>
</dbReference>
<dbReference type="SMART" id="SM00649">
    <property type="entry name" value="RL11"/>
    <property type="match status" value="1"/>
</dbReference>
<dbReference type="SUPFAM" id="SSF54747">
    <property type="entry name" value="Ribosomal L11/L12e N-terminal domain"/>
    <property type="match status" value="1"/>
</dbReference>
<dbReference type="SUPFAM" id="SSF46906">
    <property type="entry name" value="Ribosomal protein L11, C-terminal domain"/>
    <property type="match status" value="1"/>
</dbReference>
<dbReference type="PROSITE" id="PS00359">
    <property type="entry name" value="RIBOSOMAL_L11"/>
    <property type="match status" value="1"/>
</dbReference>
<organism>
    <name type="scientific">Rickettsia africae (strain ESF-5)</name>
    <dbReference type="NCBI Taxonomy" id="347255"/>
    <lineage>
        <taxon>Bacteria</taxon>
        <taxon>Pseudomonadati</taxon>
        <taxon>Pseudomonadota</taxon>
        <taxon>Alphaproteobacteria</taxon>
        <taxon>Rickettsiales</taxon>
        <taxon>Rickettsiaceae</taxon>
        <taxon>Rickettsieae</taxon>
        <taxon>Rickettsia</taxon>
        <taxon>spotted fever group</taxon>
    </lineage>
</organism>
<gene>
    <name evidence="1" type="primary">rplK</name>
    <name type="ordered locus">RAF_ORF0166</name>
</gene>
<sequence length="145" mass="15368">MSQKAIKGYINLIIPAAGATPAPPIGPALGQRKVNIAAFCKDFNDATQGMEKGIPLPTVITVYEDSSFSFKIKTPPASYFLKKYAKITKGSSATKKEAVVGKVTMDDCREIAKLKMPDLNTKNIEAATKIICGSAASMGLEVVGN</sequence>
<accession>C3PMH3</accession>
<comment type="function">
    <text evidence="1">Forms part of the ribosomal stalk which helps the ribosome interact with GTP-bound translation factors.</text>
</comment>
<comment type="subunit">
    <text evidence="1">Part of the ribosomal stalk of the 50S ribosomal subunit. Interacts with L10 and the large rRNA to form the base of the stalk. L10 forms an elongated spine to which L12 dimers bind in a sequential fashion forming a multimeric L10(L12)X complex.</text>
</comment>
<comment type="PTM">
    <text evidence="1">One or more lysine residues are methylated.</text>
</comment>
<comment type="similarity">
    <text evidence="1">Belongs to the universal ribosomal protein uL11 family.</text>
</comment>
<protein>
    <recommendedName>
        <fullName evidence="1">Large ribosomal subunit protein uL11</fullName>
    </recommendedName>
    <alternativeName>
        <fullName evidence="2">50S ribosomal protein L11</fullName>
    </alternativeName>
</protein>
<evidence type="ECO:0000255" key="1">
    <source>
        <dbReference type="HAMAP-Rule" id="MF_00736"/>
    </source>
</evidence>
<evidence type="ECO:0000305" key="2"/>
<proteinExistence type="inferred from homology"/>
<keyword id="KW-0488">Methylation</keyword>
<keyword id="KW-0687">Ribonucleoprotein</keyword>
<keyword id="KW-0689">Ribosomal protein</keyword>
<keyword id="KW-0694">RNA-binding</keyword>
<keyword id="KW-0699">rRNA-binding</keyword>
<feature type="chain" id="PRO_1000212785" description="Large ribosomal subunit protein uL11">
    <location>
        <begin position="1"/>
        <end position="145"/>
    </location>
</feature>